<feature type="chain" id="PRO_0000430787" description="2-aminobenzenesulfonate 2,3-dioxygenase subunit beta">
    <location>
        <begin position="1"/>
        <end position="150"/>
    </location>
</feature>
<feature type="sequence conflict" description="In Ref. 2; AA sequence." ref="2">
    <original>Y</original>
    <variation>W</variation>
    <location>
        <position position="11"/>
    </location>
</feature>
<feature type="sequence conflict" description="In Ref. 2; AA sequence." ref="2">
    <original>W</original>
    <variation>G</variation>
    <location>
        <position position="25"/>
    </location>
</feature>
<geneLocation type="plasmid" evidence="5">
    <name>pSAH</name>
</geneLocation>
<proteinExistence type="evidence at protein level"/>
<protein>
    <recommendedName>
        <fullName evidence="3">2-aminobenzenesulfonate 2,3-dioxygenase subunit beta</fullName>
        <ecNumber evidence="1">1.14.12.14</ecNumber>
    </recommendedName>
    <alternativeName>
        <fullName evidence="5">2-aminobenzenesulfonate dioxygenase small subunit</fullName>
    </alternativeName>
    <alternativeName>
        <fullName evidence="5">AbsAb</fullName>
    </alternativeName>
</protein>
<gene>
    <name evidence="3" type="primary">absAb</name>
</gene>
<organism>
    <name type="scientific">Alcaligenes sp</name>
    <dbReference type="NCBI Taxonomy" id="512"/>
    <lineage>
        <taxon>Bacteria</taxon>
        <taxon>Pseudomonadati</taxon>
        <taxon>Pseudomonadota</taxon>
        <taxon>Betaproteobacteria</taxon>
        <taxon>Burkholderiales</taxon>
        <taxon>Alcaligenaceae</taxon>
        <taxon>Alcaligenes</taxon>
    </lineage>
</organism>
<dbReference type="EC" id="1.14.12.14" evidence="1"/>
<dbReference type="EMBL" id="AF109074">
    <property type="protein sequence ID" value="AAF14228.2"/>
    <property type="molecule type" value="Genomic_DNA"/>
</dbReference>
<dbReference type="SMR" id="Q9RBG4"/>
<dbReference type="KEGG" id="ag:AAF14228"/>
<dbReference type="BRENDA" id="1.14.12.14">
    <property type="organism ID" value="10863"/>
</dbReference>
<dbReference type="GO" id="GO:0018627">
    <property type="term" value="F:2-aminobenzenesulfonate 2,3-dioxygenase activity"/>
    <property type="evidence" value="ECO:0007669"/>
    <property type="project" value="UniProtKB-EC"/>
</dbReference>
<dbReference type="Gene3D" id="3.10.450.50">
    <property type="match status" value="1"/>
</dbReference>
<dbReference type="InterPro" id="IPR032710">
    <property type="entry name" value="NTF2-like_dom_sf"/>
</dbReference>
<dbReference type="InterPro" id="IPR000391">
    <property type="entry name" value="Rng_hydr_dOase-bsu"/>
</dbReference>
<dbReference type="Pfam" id="PF00866">
    <property type="entry name" value="Ring_hydroxyl_B"/>
    <property type="match status" value="1"/>
</dbReference>
<dbReference type="SUPFAM" id="SSF54427">
    <property type="entry name" value="NTF2-like"/>
    <property type="match status" value="1"/>
</dbReference>
<accession>Q9RBG4</accession>
<keyword id="KW-0223">Dioxygenase</keyword>
<keyword id="KW-0903">Direct protein sequencing</keyword>
<keyword id="KW-0520">NAD</keyword>
<keyword id="KW-0560">Oxidoreductase</keyword>
<keyword id="KW-0614">Plasmid</keyword>
<sequence>MDTVSIAEFLYTNADLLNQEQFDSWLEQCSNDFSYRITTFSEELGRPMDWMDKDKSGLAHYLQNANNHERYTGRLRRHLAMPRVTKQADSSFEVRTAVAIYVIEMNGETALYGIGSYVDNVMSESSGLRLTSRVVTLDTRRLQFGPHVPI</sequence>
<reference key="1">
    <citation type="journal article" date="2010" name="Microbiol. Res.">
        <title>Identification of two vicinal operons for the degradation of 2-aminobenzenesulfonate encoded on plasmid pSAH in Alcaligenes sp. strain O-1.</title>
        <authorList>
            <person name="Ruff J."/>
            <person name="Smits T.H."/>
            <person name="Cook A.M."/>
            <person name="Schleheck D."/>
        </authorList>
    </citation>
    <scope>NUCLEOTIDE SEQUENCE [GENOMIC DNA]</scope>
    <source>
        <strain evidence="5">O-1</strain>
        <plasmid>pSAH</plasmid>
    </source>
</reference>
<reference key="2">
    <citation type="journal article" date="1999" name="Microbiology">
        <title>The oxygenase component of the 2-aminobenzenesulfonate dioxygenase system from Alcaligenes sp. strain O-1.</title>
        <authorList>
            <person name="Mampel J."/>
            <person name="Ruff J."/>
            <person name="Junker F."/>
            <person name="Cook A.M."/>
        </authorList>
    </citation>
    <scope>PROTEIN SEQUENCE OF 1-28</scope>
    <scope>FUNCTION</scope>
    <scope>CATALYTIC ACTIVITY</scope>
    <scope>BIOPHYSICOCHEMICAL PROPERTIES</scope>
    <scope>SUBUNIT</scope>
    <scope>ACTIVITY REGULATION</scope>
    <scope>INDUCTION</scope>
    <source>
        <strain evidence="5">O-1</strain>
        <plasmid>pSAH</plasmid>
    </source>
</reference>
<reference key="3">
    <citation type="journal article" date="1994" name="Microbiology">
        <title>3-Sulphocatechol 2,3-dioxygenase and other dioxygenases (EC 1.13.11.2 and EC 1.14.12.-) in the degradative pathways of 2-aminobenzenesulphonic, benzenesulphonic and 4-toluenesulphonic acids in Alcaligenes sp. strain O-1.</title>
        <authorList>
            <person name="Junker F."/>
            <person name="Leisinger T."/>
            <person name="Cook A.M."/>
        </authorList>
    </citation>
    <scope>FUNCTION</scope>
    <scope>INDUCTION</scope>
</reference>
<reference key="4">
    <citation type="journal article" date="2014" name="PLoS ONE">
        <title>Finding sequences for over 270 orphan enzymes.</title>
        <authorList>
            <person name="Shearer A.G."/>
            <person name="Altman T."/>
            <person name="Rhee C.D."/>
        </authorList>
    </citation>
    <scope>IDENTIFICATION</scope>
</reference>
<comment type="function">
    <text evidence="1 2">Beta subunit of the oxygenase component of the 2-aminobenzenesulfonate 2,3-dioxygenase system (deaminating) (ABSDOS). Can use 2-aminobenzenesulfonate (ABS), benzenesulfonate (BS), 4-toluenesulfonate (TS), 2-nitrobenzenesulfonate, 3- and 4-aminobenzenesulfonates, 4-chloro- and 4-hydroxybenzenesulfonates and pyridine-3-sulfonate as substrates. No desulfonation of ABS to aminocatechol or aminophenol detected.</text>
</comment>
<comment type="catalytic activity">
    <reaction evidence="1">
        <text>2-aminobenzenesulfonate + NADH + O2 + 2 H(+) = 2,3-dihydroxybenzenesulfonate + NH4(+) + NAD(+)</text>
        <dbReference type="Rhea" id="RHEA:23468"/>
        <dbReference type="ChEBI" id="CHEBI:15378"/>
        <dbReference type="ChEBI" id="CHEBI:15379"/>
        <dbReference type="ChEBI" id="CHEBI:15942"/>
        <dbReference type="ChEBI" id="CHEBI:28938"/>
        <dbReference type="ChEBI" id="CHEBI:33565"/>
        <dbReference type="ChEBI" id="CHEBI:57540"/>
        <dbReference type="ChEBI" id="CHEBI:57945"/>
        <dbReference type="EC" id="1.14.12.14"/>
    </reaction>
</comment>
<comment type="activity regulation">
    <text evidence="1">Inhibited by o-phenanthroline.</text>
</comment>
<comment type="biophysicochemical properties">
    <kinetics>
        <KM evidence="1">29 uM for 2-aminobenzenesulfonate</KM>
        <KM evidence="1">18 uM for benzenesulfonate</KM>
        <KM evidence="1">108 uM for 4-toluenesulfonate</KM>
        <Vmax evidence="1">140.0 pmol/sec/mg enzyme with 2-aminobenzenesulfonate as substrate</Vmax>
        <Vmax evidence="1">118.0 pmol/sec/mg enzyme with benzenesulfonate as substrate</Vmax>
        <Vmax evidence="1">72.0 pmol/sec/mg enzyme with 4-toluenesulfonate as substrate</Vmax>
    </kinetics>
    <phDependence>
        <text evidence="1">Optimum pH is 7.5.</text>
    </phDependence>
    <temperatureDependence>
        <text evidence="1">Optimum temperature is 35 degrees Celsius.</text>
    </temperatureDependence>
</comment>
<comment type="subunit">
    <text evidence="1">Heterotetramer with a alpha2beta2 structure.</text>
</comment>
<comment type="induction">
    <text evidence="1 2">Part of the abs operon that is induced during growth with 2-aminobenzenesulfonate (ABS) as carbon source.</text>
</comment>
<comment type="similarity">
    <text evidence="4">Belongs to the bacterial ring-hydroxylating dioxygenase beta subunit family.</text>
</comment>
<name>ABSAB_ALCSP</name>
<evidence type="ECO:0000269" key="1">
    <source>
    </source>
</evidence>
<evidence type="ECO:0000269" key="2">
    <source>
    </source>
</evidence>
<evidence type="ECO:0000303" key="3">
    <source>
    </source>
</evidence>
<evidence type="ECO:0000305" key="4"/>
<evidence type="ECO:0000312" key="5">
    <source>
        <dbReference type="EMBL" id="AAF14228.2"/>
    </source>
</evidence>